<reference key="1">
    <citation type="journal article" date="2007" name="PLoS Genet.">
        <title>Patterns and implications of gene gain and loss in the evolution of Prochlorococcus.</title>
        <authorList>
            <person name="Kettler G.C."/>
            <person name="Martiny A.C."/>
            <person name="Huang K."/>
            <person name="Zucker J."/>
            <person name="Coleman M.L."/>
            <person name="Rodrigue S."/>
            <person name="Chen F."/>
            <person name="Lapidus A."/>
            <person name="Ferriera S."/>
            <person name="Johnson J."/>
            <person name="Steglich C."/>
            <person name="Church G.M."/>
            <person name="Richardson P."/>
            <person name="Chisholm S.W."/>
        </authorList>
    </citation>
    <scope>NUCLEOTIDE SEQUENCE [LARGE SCALE GENOMIC DNA]</scope>
    <source>
        <strain>NATL2A</strain>
    </source>
</reference>
<gene>
    <name evidence="1" type="primary">gcvH</name>
    <name type="ordered locus">PMN2A_1268</name>
</gene>
<accession>Q46IC0</accession>
<keyword id="KW-0450">Lipoyl</keyword>
<keyword id="KW-1185">Reference proteome</keyword>
<feature type="chain" id="PRO_0000302417" description="Glycine cleavage system H protein">
    <location>
        <begin position="1"/>
        <end position="128"/>
    </location>
</feature>
<feature type="domain" description="Lipoyl-binding" evidence="2">
    <location>
        <begin position="24"/>
        <end position="106"/>
    </location>
</feature>
<feature type="modified residue" description="N6-lipoyllysine" evidence="1">
    <location>
        <position position="65"/>
    </location>
</feature>
<name>GCSH_PROMT</name>
<comment type="function">
    <text evidence="1">The glycine cleavage system catalyzes the degradation of glycine. The H protein shuttles the methylamine group of glycine from the P protein to the T protein.</text>
</comment>
<comment type="cofactor">
    <cofactor evidence="1">
        <name>(R)-lipoate</name>
        <dbReference type="ChEBI" id="CHEBI:83088"/>
    </cofactor>
    <text evidence="1">Binds 1 lipoyl cofactor covalently.</text>
</comment>
<comment type="subunit">
    <text evidence="1">The glycine cleavage system is composed of four proteins: P, T, L and H.</text>
</comment>
<comment type="similarity">
    <text evidence="1">Belongs to the GcvH family.</text>
</comment>
<proteinExistence type="inferred from homology"/>
<protein>
    <recommendedName>
        <fullName evidence="1">Glycine cleavage system H protein</fullName>
    </recommendedName>
</protein>
<sequence>MAFSFPDHFRFADSHEYAFADDSLVRIGISEFAVDQLGDIVFVDLPEEGTAIAKGESFGSVESVKAVEDMYAPVSGEIVHRNNSVLASPEELQNDPHGEGWLLIIRPDNPAQLKELMDSETYSKKISA</sequence>
<dbReference type="EMBL" id="CP000095">
    <property type="protein sequence ID" value="AAZ58758.1"/>
    <property type="molecule type" value="Genomic_DNA"/>
</dbReference>
<dbReference type="RefSeq" id="WP_011295612.1">
    <property type="nucleotide sequence ID" value="NC_007335.2"/>
</dbReference>
<dbReference type="SMR" id="Q46IC0"/>
<dbReference type="STRING" id="59920.PMN2A_1268"/>
<dbReference type="KEGG" id="pmn:PMN2A_1268"/>
<dbReference type="HOGENOM" id="CLU_097408_2_0_3"/>
<dbReference type="OrthoDB" id="9796712at2"/>
<dbReference type="PhylomeDB" id="Q46IC0"/>
<dbReference type="Proteomes" id="UP000002535">
    <property type="component" value="Chromosome"/>
</dbReference>
<dbReference type="GO" id="GO:0005829">
    <property type="term" value="C:cytosol"/>
    <property type="evidence" value="ECO:0007669"/>
    <property type="project" value="TreeGrafter"/>
</dbReference>
<dbReference type="GO" id="GO:0005960">
    <property type="term" value="C:glycine cleavage complex"/>
    <property type="evidence" value="ECO:0007669"/>
    <property type="project" value="InterPro"/>
</dbReference>
<dbReference type="GO" id="GO:0019464">
    <property type="term" value="P:glycine decarboxylation via glycine cleavage system"/>
    <property type="evidence" value="ECO:0007669"/>
    <property type="project" value="UniProtKB-UniRule"/>
</dbReference>
<dbReference type="CDD" id="cd06848">
    <property type="entry name" value="GCS_H"/>
    <property type="match status" value="1"/>
</dbReference>
<dbReference type="Gene3D" id="2.40.50.100">
    <property type="match status" value="1"/>
</dbReference>
<dbReference type="HAMAP" id="MF_00272">
    <property type="entry name" value="GcvH"/>
    <property type="match status" value="1"/>
</dbReference>
<dbReference type="InterPro" id="IPR003016">
    <property type="entry name" value="2-oxoA_DH_lipoyl-BS"/>
</dbReference>
<dbReference type="InterPro" id="IPR000089">
    <property type="entry name" value="Biotin_lipoyl"/>
</dbReference>
<dbReference type="InterPro" id="IPR002930">
    <property type="entry name" value="GCV_H"/>
</dbReference>
<dbReference type="InterPro" id="IPR033753">
    <property type="entry name" value="GCV_H/Fam206"/>
</dbReference>
<dbReference type="InterPro" id="IPR017453">
    <property type="entry name" value="GCV_H_sub"/>
</dbReference>
<dbReference type="InterPro" id="IPR011053">
    <property type="entry name" value="Single_hybrid_motif"/>
</dbReference>
<dbReference type="NCBIfam" id="TIGR00527">
    <property type="entry name" value="gcvH"/>
    <property type="match status" value="1"/>
</dbReference>
<dbReference type="NCBIfam" id="NF002270">
    <property type="entry name" value="PRK01202.1"/>
    <property type="match status" value="1"/>
</dbReference>
<dbReference type="PANTHER" id="PTHR11715">
    <property type="entry name" value="GLYCINE CLEAVAGE SYSTEM H PROTEIN"/>
    <property type="match status" value="1"/>
</dbReference>
<dbReference type="PANTHER" id="PTHR11715:SF3">
    <property type="entry name" value="GLYCINE CLEAVAGE SYSTEM H PROTEIN-RELATED"/>
    <property type="match status" value="1"/>
</dbReference>
<dbReference type="Pfam" id="PF01597">
    <property type="entry name" value="GCV_H"/>
    <property type="match status" value="1"/>
</dbReference>
<dbReference type="SUPFAM" id="SSF51230">
    <property type="entry name" value="Single hybrid motif"/>
    <property type="match status" value="1"/>
</dbReference>
<dbReference type="PROSITE" id="PS50968">
    <property type="entry name" value="BIOTINYL_LIPOYL"/>
    <property type="match status" value="1"/>
</dbReference>
<dbReference type="PROSITE" id="PS00189">
    <property type="entry name" value="LIPOYL"/>
    <property type="match status" value="1"/>
</dbReference>
<organism>
    <name type="scientific">Prochlorococcus marinus (strain NATL2A)</name>
    <dbReference type="NCBI Taxonomy" id="59920"/>
    <lineage>
        <taxon>Bacteria</taxon>
        <taxon>Bacillati</taxon>
        <taxon>Cyanobacteriota</taxon>
        <taxon>Cyanophyceae</taxon>
        <taxon>Synechococcales</taxon>
        <taxon>Prochlorococcaceae</taxon>
        <taxon>Prochlorococcus</taxon>
    </lineage>
</organism>
<evidence type="ECO:0000255" key="1">
    <source>
        <dbReference type="HAMAP-Rule" id="MF_00272"/>
    </source>
</evidence>
<evidence type="ECO:0000255" key="2">
    <source>
        <dbReference type="PROSITE-ProRule" id="PRU01066"/>
    </source>
</evidence>